<reference key="1">
    <citation type="journal article" date="2006" name="Nat. Biotechnol.">
        <title>The genome and transcriptomes of the anti-tumor agent Clostridium novyi-NT.</title>
        <authorList>
            <person name="Bettegowda C."/>
            <person name="Huang X."/>
            <person name="Lin J."/>
            <person name="Cheong I."/>
            <person name="Kohli M."/>
            <person name="Szabo S.A."/>
            <person name="Zhang X."/>
            <person name="Diaz L.A. Jr."/>
            <person name="Velculescu V.E."/>
            <person name="Parmigiani G."/>
            <person name="Kinzler K.W."/>
            <person name="Vogelstein B."/>
            <person name="Zhou S."/>
        </authorList>
    </citation>
    <scope>NUCLEOTIDE SEQUENCE [LARGE SCALE GENOMIC DNA]</scope>
    <source>
        <strain>NT</strain>
    </source>
</reference>
<organism>
    <name type="scientific">Clostridium novyi (strain NT)</name>
    <dbReference type="NCBI Taxonomy" id="386415"/>
    <lineage>
        <taxon>Bacteria</taxon>
        <taxon>Bacillati</taxon>
        <taxon>Bacillota</taxon>
        <taxon>Clostridia</taxon>
        <taxon>Eubacteriales</taxon>
        <taxon>Clostridiaceae</taxon>
        <taxon>Clostridium</taxon>
    </lineage>
</organism>
<protein>
    <recommendedName>
        <fullName evidence="1">Adenylate kinase</fullName>
        <shortName evidence="1">AK</shortName>
        <ecNumber evidence="1">2.7.4.3</ecNumber>
    </recommendedName>
    <alternativeName>
        <fullName evidence="1">ATP-AMP transphosphorylase</fullName>
    </alternativeName>
    <alternativeName>
        <fullName evidence="1">ATP:AMP phosphotransferase</fullName>
    </alternativeName>
    <alternativeName>
        <fullName evidence="1">Adenylate monophosphate kinase</fullName>
    </alternativeName>
</protein>
<accession>A0PXW7</accession>
<sequence length="216" mass="24366">MRMILLGPPGAGKGTQAKLISEKYSIPHISTGDIFRKNISEKTPLGVKAKEYMDKGQLVPDELTIDLVNDRLTHEDCKKGFLLDGFPRTVKQAEALEKFLTENNQSLDTALLIDVPSSFILERMTGRRVCPSCGASYHIKFNPPKIEGLCDVCKKEVIQRKDDTEETVKERIEVYDRQTQPLVDFYSSKDQLFVVDGTQSIDQVFETISNHIEGDK</sequence>
<gene>
    <name evidence="1" type="primary">adk</name>
    <name type="ordered locus">NT01CX_1136</name>
</gene>
<feature type="chain" id="PRO_1000021722" description="Adenylate kinase">
    <location>
        <begin position="1"/>
        <end position="216"/>
    </location>
</feature>
<feature type="region of interest" description="NMP" evidence="1">
    <location>
        <begin position="30"/>
        <end position="59"/>
    </location>
</feature>
<feature type="region of interest" description="LID" evidence="1">
    <location>
        <begin position="126"/>
        <end position="163"/>
    </location>
</feature>
<feature type="binding site" evidence="1">
    <location>
        <begin position="10"/>
        <end position="15"/>
    </location>
    <ligand>
        <name>ATP</name>
        <dbReference type="ChEBI" id="CHEBI:30616"/>
    </ligand>
</feature>
<feature type="binding site" evidence="1">
    <location>
        <position position="31"/>
    </location>
    <ligand>
        <name>AMP</name>
        <dbReference type="ChEBI" id="CHEBI:456215"/>
    </ligand>
</feature>
<feature type="binding site" evidence="1">
    <location>
        <position position="36"/>
    </location>
    <ligand>
        <name>AMP</name>
        <dbReference type="ChEBI" id="CHEBI:456215"/>
    </ligand>
</feature>
<feature type="binding site" evidence="1">
    <location>
        <begin position="57"/>
        <end position="59"/>
    </location>
    <ligand>
        <name>AMP</name>
        <dbReference type="ChEBI" id="CHEBI:456215"/>
    </ligand>
</feature>
<feature type="binding site" evidence="1">
    <location>
        <begin position="85"/>
        <end position="88"/>
    </location>
    <ligand>
        <name>AMP</name>
        <dbReference type="ChEBI" id="CHEBI:456215"/>
    </ligand>
</feature>
<feature type="binding site" evidence="1">
    <location>
        <position position="92"/>
    </location>
    <ligand>
        <name>AMP</name>
        <dbReference type="ChEBI" id="CHEBI:456215"/>
    </ligand>
</feature>
<feature type="binding site" evidence="1">
    <location>
        <position position="127"/>
    </location>
    <ligand>
        <name>ATP</name>
        <dbReference type="ChEBI" id="CHEBI:30616"/>
    </ligand>
</feature>
<feature type="binding site" evidence="1">
    <location>
        <position position="130"/>
    </location>
    <ligand>
        <name>Zn(2+)</name>
        <dbReference type="ChEBI" id="CHEBI:29105"/>
        <note>structural</note>
    </ligand>
</feature>
<feature type="binding site" evidence="1">
    <location>
        <position position="133"/>
    </location>
    <ligand>
        <name>Zn(2+)</name>
        <dbReference type="ChEBI" id="CHEBI:29105"/>
        <note>structural</note>
    </ligand>
</feature>
<feature type="binding site" evidence="1">
    <location>
        <begin position="136"/>
        <end position="137"/>
    </location>
    <ligand>
        <name>ATP</name>
        <dbReference type="ChEBI" id="CHEBI:30616"/>
    </ligand>
</feature>
<feature type="binding site" evidence="1">
    <location>
        <position position="150"/>
    </location>
    <ligand>
        <name>Zn(2+)</name>
        <dbReference type="ChEBI" id="CHEBI:29105"/>
        <note>structural</note>
    </ligand>
</feature>
<feature type="binding site" evidence="1">
    <location>
        <position position="153"/>
    </location>
    <ligand>
        <name>Zn(2+)</name>
        <dbReference type="ChEBI" id="CHEBI:29105"/>
        <note>structural</note>
    </ligand>
</feature>
<feature type="binding site" evidence="1">
    <location>
        <position position="160"/>
    </location>
    <ligand>
        <name>AMP</name>
        <dbReference type="ChEBI" id="CHEBI:456215"/>
    </ligand>
</feature>
<feature type="binding site" evidence="1">
    <location>
        <position position="171"/>
    </location>
    <ligand>
        <name>AMP</name>
        <dbReference type="ChEBI" id="CHEBI:456215"/>
    </ligand>
</feature>
<feature type="binding site" evidence="1">
    <location>
        <position position="199"/>
    </location>
    <ligand>
        <name>ATP</name>
        <dbReference type="ChEBI" id="CHEBI:30616"/>
    </ligand>
</feature>
<evidence type="ECO:0000255" key="1">
    <source>
        <dbReference type="HAMAP-Rule" id="MF_00235"/>
    </source>
</evidence>
<name>KAD_CLONN</name>
<keyword id="KW-0067">ATP-binding</keyword>
<keyword id="KW-0963">Cytoplasm</keyword>
<keyword id="KW-0418">Kinase</keyword>
<keyword id="KW-0479">Metal-binding</keyword>
<keyword id="KW-0545">Nucleotide biosynthesis</keyword>
<keyword id="KW-0547">Nucleotide-binding</keyword>
<keyword id="KW-1185">Reference proteome</keyword>
<keyword id="KW-0808">Transferase</keyword>
<keyword id="KW-0862">Zinc</keyword>
<dbReference type="EC" id="2.7.4.3" evidence="1"/>
<dbReference type="EMBL" id="CP000382">
    <property type="protein sequence ID" value="ABK62133.1"/>
    <property type="molecule type" value="Genomic_DNA"/>
</dbReference>
<dbReference type="RefSeq" id="WP_011721231.1">
    <property type="nucleotide sequence ID" value="NC_008593.1"/>
</dbReference>
<dbReference type="SMR" id="A0PXW7"/>
<dbReference type="STRING" id="386415.NT01CX_1136"/>
<dbReference type="KEGG" id="cno:NT01CX_1136"/>
<dbReference type="eggNOG" id="COG0563">
    <property type="taxonomic scope" value="Bacteria"/>
</dbReference>
<dbReference type="HOGENOM" id="CLU_032354_1_2_9"/>
<dbReference type="UniPathway" id="UPA00588">
    <property type="reaction ID" value="UER00649"/>
</dbReference>
<dbReference type="Proteomes" id="UP000008220">
    <property type="component" value="Chromosome"/>
</dbReference>
<dbReference type="GO" id="GO:0005737">
    <property type="term" value="C:cytoplasm"/>
    <property type="evidence" value="ECO:0007669"/>
    <property type="project" value="UniProtKB-SubCell"/>
</dbReference>
<dbReference type="GO" id="GO:0004017">
    <property type="term" value="F:adenylate kinase activity"/>
    <property type="evidence" value="ECO:0007669"/>
    <property type="project" value="UniProtKB-UniRule"/>
</dbReference>
<dbReference type="GO" id="GO:0005524">
    <property type="term" value="F:ATP binding"/>
    <property type="evidence" value="ECO:0007669"/>
    <property type="project" value="UniProtKB-UniRule"/>
</dbReference>
<dbReference type="GO" id="GO:0008270">
    <property type="term" value="F:zinc ion binding"/>
    <property type="evidence" value="ECO:0007669"/>
    <property type="project" value="UniProtKB-UniRule"/>
</dbReference>
<dbReference type="GO" id="GO:0044209">
    <property type="term" value="P:AMP salvage"/>
    <property type="evidence" value="ECO:0007669"/>
    <property type="project" value="UniProtKB-UniRule"/>
</dbReference>
<dbReference type="CDD" id="cd01428">
    <property type="entry name" value="ADK"/>
    <property type="match status" value="1"/>
</dbReference>
<dbReference type="FunFam" id="3.40.50.300:FF:000106">
    <property type="entry name" value="Adenylate kinase mitochondrial"/>
    <property type="match status" value="1"/>
</dbReference>
<dbReference type="Gene3D" id="3.40.50.300">
    <property type="entry name" value="P-loop containing nucleotide triphosphate hydrolases"/>
    <property type="match status" value="1"/>
</dbReference>
<dbReference type="HAMAP" id="MF_00235">
    <property type="entry name" value="Adenylate_kinase_Adk"/>
    <property type="match status" value="1"/>
</dbReference>
<dbReference type="InterPro" id="IPR006259">
    <property type="entry name" value="Adenyl_kin_sub"/>
</dbReference>
<dbReference type="InterPro" id="IPR000850">
    <property type="entry name" value="Adenylat/UMP-CMP_kin"/>
</dbReference>
<dbReference type="InterPro" id="IPR033690">
    <property type="entry name" value="Adenylat_kinase_CS"/>
</dbReference>
<dbReference type="InterPro" id="IPR007862">
    <property type="entry name" value="Adenylate_kinase_lid-dom"/>
</dbReference>
<dbReference type="InterPro" id="IPR027417">
    <property type="entry name" value="P-loop_NTPase"/>
</dbReference>
<dbReference type="NCBIfam" id="TIGR01351">
    <property type="entry name" value="adk"/>
    <property type="match status" value="1"/>
</dbReference>
<dbReference type="NCBIfam" id="NF001379">
    <property type="entry name" value="PRK00279.1-1"/>
    <property type="match status" value="1"/>
</dbReference>
<dbReference type="NCBIfam" id="NF001380">
    <property type="entry name" value="PRK00279.1-2"/>
    <property type="match status" value="1"/>
</dbReference>
<dbReference type="NCBIfam" id="NF001381">
    <property type="entry name" value="PRK00279.1-3"/>
    <property type="match status" value="1"/>
</dbReference>
<dbReference type="NCBIfam" id="NF011100">
    <property type="entry name" value="PRK14527.1"/>
    <property type="match status" value="1"/>
</dbReference>
<dbReference type="PANTHER" id="PTHR23359">
    <property type="entry name" value="NUCLEOTIDE KINASE"/>
    <property type="match status" value="1"/>
</dbReference>
<dbReference type="Pfam" id="PF00406">
    <property type="entry name" value="ADK"/>
    <property type="match status" value="1"/>
</dbReference>
<dbReference type="Pfam" id="PF05191">
    <property type="entry name" value="ADK_lid"/>
    <property type="match status" value="1"/>
</dbReference>
<dbReference type="PRINTS" id="PR00094">
    <property type="entry name" value="ADENYLTKNASE"/>
</dbReference>
<dbReference type="SUPFAM" id="SSF52540">
    <property type="entry name" value="P-loop containing nucleoside triphosphate hydrolases"/>
    <property type="match status" value="1"/>
</dbReference>
<dbReference type="PROSITE" id="PS00113">
    <property type="entry name" value="ADENYLATE_KINASE"/>
    <property type="match status" value="1"/>
</dbReference>
<proteinExistence type="inferred from homology"/>
<comment type="function">
    <text evidence="1">Catalyzes the reversible transfer of the terminal phosphate group between ATP and AMP. Plays an important role in cellular energy homeostasis and in adenine nucleotide metabolism.</text>
</comment>
<comment type="catalytic activity">
    <reaction evidence="1">
        <text>AMP + ATP = 2 ADP</text>
        <dbReference type="Rhea" id="RHEA:12973"/>
        <dbReference type="ChEBI" id="CHEBI:30616"/>
        <dbReference type="ChEBI" id="CHEBI:456215"/>
        <dbReference type="ChEBI" id="CHEBI:456216"/>
        <dbReference type="EC" id="2.7.4.3"/>
    </reaction>
</comment>
<comment type="pathway">
    <text evidence="1">Purine metabolism; AMP biosynthesis via salvage pathway; AMP from ADP: step 1/1.</text>
</comment>
<comment type="subunit">
    <text evidence="1">Monomer.</text>
</comment>
<comment type="subcellular location">
    <subcellularLocation>
        <location evidence="1">Cytoplasm</location>
    </subcellularLocation>
</comment>
<comment type="domain">
    <text evidence="1">Consists of three domains, a large central CORE domain and two small peripheral domains, NMPbind and LID, which undergo movements during catalysis. The LID domain closes over the site of phosphoryl transfer upon ATP binding. Assembling and dissambling the active center during each catalytic cycle provides an effective means to prevent ATP hydrolysis. Some bacteria have evolved a zinc-coordinating structure that stabilizes the LID domain.</text>
</comment>
<comment type="similarity">
    <text evidence="1">Belongs to the adenylate kinase family.</text>
</comment>